<name>RR19_NYMAL</name>
<protein>
    <recommendedName>
        <fullName evidence="1">Small ribosomal subunit protein uS19c</fullName>
    </recommendedName>
    <alternativeName>
        <fullName evidence="2">30S ribosomal protein S19, chloroplastic</fullName>
    </alternativeName>
</protein>
<dbReference type="EMBL" id="AJ627251">
    <property type="protein sequence ID" value="CAF28635.1"/>
    <property type="molecule type" value="Genomic_DNA"/>
</dbReference>
<dbReference type="RefSeq" id="YP_053195.1">
    <property type="nucleotide sequence ID" value="NC_006050.1"/>
</dbReference>
<dbReference type="SMR" id="Q6EW11"/>
<dbReference type="GeneID" id="2896206"/>
<dbReference type="GO" id="GO:0009507">
    <property type="term" value="C:chloroplast"/>
    <property type="evidence" value="ECO:0007669"/>
    <property type="project" value="UniProtKB-SubCell"/>
</dbReference>
<dbReference type="GO" id="GO:0005763">
    <property type="term" value="C:mitochondrial small ribosomal subunit"/>
    <property type="evidence" value="ECO:0007669"/>
    <property type="project" value="TreeGrafter"/>
</dbReference>
<dbReference type="GO" id="GO:0019843">
    <property type="term" value="F:rRNA binding"/>
    <property type="evidence" value="ECO:0007669"/>
    <property type="project" value="UniProtKB-UniRule"/>
</dbReference>
<dbReference type="GO" id="GO:0003735">
    <property type="term" value="F:structural constituent of ribosome"/>
    <property type="evidence" value="ECO:0007669"/>
    <property type="project" value="InterPro"/>
</dbReference>
<dbReference type="GO" id="GO:0000028">
    <property type="term" value="P:ribosomal small subunit assembly"/>
    <property type="evidence" value="ECO:0007669"/>
    <property type="project" value="TreeGrafter"/>
</dbReference>
<dbReference type="GO" id="GO:0006412">
    <property type="term" value="P:translation"/>
    <property type="evidence" value="ECO:0007669"/>
    <property type="project" value="UniProtKB-UniRule"/>
</dbReference>
<dbReference type="FunFam" id="3.30.860.10:FF:000001">
    <property type="entry name" value="30S ribosomal protein S19"/>
    <property type="match status" value="1"/>
</dbReference>
<dbReference type="Gene3D" id="3.30.860.10">
    <property type="entry name" value="30s Ribosomal Protein S19, Chain A"/>
    <property type="match status" value="1"/>
</dbReference>
<dbReference type="HAMAP" id="MF_00531">
    <property type="entry name" value="Ribosomal_uS19"/>
    <property type="match status" value="1"/>
</dbReference>
<dbReference type="InterPro" id="IPR002222">
    <property type="entry name" value="Ribosomal_uS19"/>
</dbReference>
<dbReference type="InterPro" id="IPR005732">
    <property type="entry name" value="Ribosomal_uS19_bac-type"/>
</dbReference>
<dbReference type="InterPro" id="IPR020934">
    <property type="entry name" value="Ribosomal_uS19_CS"/>
</dbReference>
<dbReference type="InterPro" id="IPR023575">
    <property type="entry name" value="Ribosomal_uS19_SF"/>
</dbReference>
<dbReference type="NCBIfam" id="TIGR01050">
    <property type="entry name" value="rpsS_bact"/>
    <property type="match status" value="1"/>
</dbReference>
<dbReference type="PANTHER" id="PTHR11880">
    <property type="entry name" value="RIBOSOMAL PROTEIN S19P FAMILY MEMBER"/>
    <property type="match status" value="1"/>
</dbReference>
<dbReference type="PANTHER" id="PTHR11880:SF8">
    <property type="entry name" value="SMALL RIBOSOMAL SUBUNIT PROTEIN US19M"/>
    <property type="match status" value="1"/>
</dbReference>
<dbReference type="Pfam" id="PF00203">
    <property type="entry name" value="Ribosomal_S19"/>
    <property type="match status" value="1"/>
</dbReference>
<dbReference type="PIRSF" id="PIRSF002144">
    <property type="entry name" value="Ribosomal_S19"/>
    <property type="match status" value="1"/>
</dbReference>
<dbReference type="PRINTS" id="PR00975">
    <property type="entry name" value="RIBOSOMALS19"/>
</dbReference>
<dbReference type="SUPFAM" id="SSF54570">
    <property type="entry name" value="Ribosomal protein S19"/>
    <property type="match status" value="1"/>
</dbReference>
<dbReference type="PROSITE" id="PS00323">
    <property type="entry name" value="RIBOSOMAL_S19"/>
    <property type="match status" value="1"/>
</dbReference>
<evidence type="ECO:0000255" key="1">
    <source>
        <dbReference type="HAMAP-Rule" id="MF_00531"/>
    </source>
</evidence>
<evidence type="ECO:0000305" key="2"/>
<keyword id="KW-0150">Chloroplast</keyword>
<keyword id="KW-0934">Plastid</keyword>
<keyword id="KW-0687">Ribonucleoprotein</keyword>
<keyword id="KW-0689">Ribosomal protein</keyword>
<keyword id="KW-0694">RNA-binding</keyword>
<keyword id="KW-0699">rRNA-binding</keyword>
<sequence>MARSSKKNPFVANHLLSKIEKLNKAEERSIIVTWSRASTIIFAMVGHTIAVHNGKEHLPIYITERMVGHKLGEFAPTLTFRGHARNDNRSRR</sequence>
<proteinExistence type="inferred from homology"/>
<comment type="function">
    <text evidence="1">Protein S19 forms a complex with S13 that binds strongly to the 16S ribosomal RNA.</text>
</comment>
<comment type="subcellular location">
    <subcellularLocation>
        <location>Plastid</location>
        <location>Chloroplast</location>
    </subcellularLocation>
</comment>
<comment type="similarity">
    <text evidence="1">Belongs to the universal ribosomal protein uS19 family.</text>
</comment>
<feature type="chain" id="PRO_0000129973" description="Small ribosomal subunit protein uS19c">
    <location>
        <begin position="1"/>
        <end position="92"/>
    </location>
</feature>
<gene>
    <name evidence="1" type="primary">rps19</name>
</gene>
<reference key="1">
    <citation type="journal article" date="2004" name="Mol. Biol. Evol.">
        <title>The chloroplast genome of Nymphaea alba: whole-genome analyses and the problem of identifying the most basal angiosperm.</title>
        <authorList>
            <person name="Goremykin V.V."/>
            <person name="Hirsch-Ernst K.I."/>
            <person name="Woelfl S."/>
            <person name="Hellwig F.H."/>
        </authorList>
    </citation>
    <scope>NUCLEOTIDE SEQUENCE [LARGE SCALE GENOMIC DNA]</scope>
</reference>
<accession>Q6EW11</accession>
<geneLocation type="chloroplast"/>
<organism>
    <name type="scientific">Nymphaea alba</name>
    <name type="common">White water-lily</name>
    <name type="synonym">Castalia alba</name>
    <dbReference type="NCBI Taxonomy" id="34301"/>
    <lineage>
        <taxon>Eukaryota</taxon>
        <taxon>Viridiplantae</taxon>
        <taxon>Streptophyta</taxon>
        <taxon>Embryophyta</taxon>
        <taxon>Tracheophyta</taxon>
        <taxon>Spermatophyta</taxon>
        <taxon>Magnoliopsida</taxon>
        <taxon>Nymphaeales</taxon>
        <taxon>Nymphaeaceae</taxon>
        <taxon>Nymphaea</taxon>
    </lineage>
</organism>